<reference key="1">
    <citation type="journal article" date="2000" name="AIDS">
        <title>HIV-1 subtype H near-full length genome reference strains and analysis of subtype-H-containing inter-subtype recombinants.</title>
        <authorList>
            <person name="Janssens W."/>
            <person name="Laukkanen T."/>
            <person name="Salminen M.O."/>
            <person name="Carr J.K."/>
            <person name="Van der Auwera G."/>
            <person name="Heyndrickx L."/>
            <person name="van der Groen G."/>
            <person name="McCutchan F.E."/>
        </authorList>
    </citation>
    <scope>NUCLEOTIDE SEQUENCE [GENOMIC DNA]</scope>
</reference>
<reference key="2">
    <citation type="journal article" date="2005" name="Microbes Infect.">
        <title>Decoding Tat: the biology of HIV Tat posttranslational modifications.</title>
        <authorList>
            <person name="Hetzer C."/>
            <person name="Dormeyer W."/>
            <person name="Schnolzer M."/>
            <person name="Ott M."/>
        </authorList>
    </citation>
    <scope>REVIEW</scope>
    <scope>ALTERNATIVE SPLICING</scope>
</reference>
<reference key="3">
    <citation type="journal article" date="2006" name="Front. Biosci.">
        <title>The multiple functions of HIV-1 Tat: proliferation versus apoptosis.</title>
        <authorList>
            <person name="Peruzzi F."/>
        </authorList>
    </citation>
    <scope>REVIEW</scope>
</reference>
<reference key="4">
    <citation type="journal article" date="2006" name="Microbes Infect.">
        <title>HIV tat and neurotoxicity.</title>
        <authorList>
            <person name="King J.E."/>
            <person name="Eugenin E.A."/>
            <person name="Buckner C.M."/>
            <person name="Berman J.W."/>
        </authorList>
    </citation>
    <scope>REVIEW</scope>
</reference>
<accession>Q9Q717</accession>
<proteinExistence type="inferred from homology"/>
<organism>
    <name type="scientific">Human immunodeficiency virus type 1 group M subtype H (isolate VI991)</name>
    <name type="common">HIV-1</name>
    <dbReference type="NCBI Taxonomy" id="388888"/>
    <lineage>
        <taxon>Viruses</taxon>
        <taxon>Riboviria</taxon>
        <taxon>Pararnavirae</taxon>
        <taxon>Artverviricota</taxon>
        <taxon>Revtraviricetes</taxon>
        <taxon>Ortervirales</taxon>
        <taxon>Retroviridae</taxon>
        <taxon>Orthoretrovirinae</taxon>
        <taxon>Lentivirus</taxon>
        <taxon>Human immunodeficiency virus type 1</taxon>
    </lineage>
</organism>
<comment type="function">
    <text evidence="1">Transcriptional activator that increases RNA Pol II processivity, thereby increasing the level of full-length viral transcripts. Recognizes a hairpin structure at the 5'-LTR of the nascent viral mRNAs referred to as the transactivation responsive RNA element (TAR) and recruits the cyclin T1-CDK9 complex (P-TEFb complex) that will in turn hyperphosphorylate the RNA polymerase II to allow efficient elongation. The CDK9 component of P-TEFb and other Tat-activated kinases hyperphosphorylate the C-terminus of RNA Pol II that becomes stabilized and much more processive. Other factors such as HTATSF1/Tat-SF1, SUPT5H/SPT5, and HTATIP2 are also important for Tat's function. Besides its effect on RNA Pol II processivity, Tat induces chromatin remodeling of proviral genes by recruiting the histone acetyltransferases (HATs) CREBBP, EP300 and PCAF to the chromatin. This also contributes to the increase in proviral transcription rate, especially when the provirus integrates in transcriptionally silent region of the host genome. To ensure maximal activation of the LTR, Tat mediates nuclear translocation of NF-kappa-B by interacting with host RELA. Through its interaction with host TBP, Tat may also modulate transcription initiation. Tat can reactivate a latently infected cell by penetrating in it and transactivating its LTR promoter. In the cytoplasm, Tat is thought to act as a translational activator of HIV-1 mRNAs.</text>
</comment>
<comment type="function">
    <text evidence="1">Extracellular circulating Tat can be endocytosed by surrounding uninfected cells via the binding to several surface receptors such as CD26, CXCR4, heparan sulfate proteoglycans (HSPG) or LDLR. Neurons are rarely infected, but they internalize Tat via their LDLR. Through its interaction with nuclear HATs, Tat is potentially able to control the acetylation-dependent cellular gene expression. Modulates the expression of many cellular genes involved in cell survival, proliferation or in coding for cytokines or cytokine receptors. Tat plays a role in T-cell and neurons apoptosis. Tat induced neurotoxicity and apoptosis probably contribute to neuroAIDS. Circulating Tat also acts as a chemokine-like and/or growth factor-like molecule that binds to specific receptors on the surface of the cells, affecting many cellular pathways. In the vascular system, Tat binds to ITGAV/ITGB3 and ITGA5/ITGB1 integrins dimers at the surface of endothelial cells and competes with bFGF for heparin-binding sites, leading to an excess of soluble bFGF.</text>
</comment>
<comment type="subunit">
    <text evidence="1">Interacts with host CCNT1. Associates with the P-TEFb complex composed at least of Tat, P-TEFb (CDK9 and CCNT1), TAR RNA, RNA Pol II. Recruits the HATs CREBBP, TAF1/TFIID, EP300, PCAF and GCN5L2. Interacts with host KAT5/Tip60; this interaction targets the latter to degradation. Interacts with the host deacetylase SIRT1. Interacts with host capping enzyme RNGTT; this interaction stimulates RNGTT. Binds to host KDR, and to the host integrins ITGAV/ITGB3 and ITGA5/ITGB1. Interacts with host KPNB1/importin beta-1 without previous binding to KPNA1/importin alpha-1. Interacts with EIF2AK2. Interacts with host nucleosome assembly protein NAP1L1; this interaction may be required for the transport of Tat within the nucleus, since the two proteins interact at the nuclear rim. Interacts with host C1QBP/SF2P32; this interaction involves lysine-acetylated Tat. Interacts with the host chemokine receptors CCR2, CCR3 and CXCR4. Interacts with host DPP4/CD26; this interaction may trigger an anti-proliferative effect. Interacts with host LDLR. Interacts with the host extracellular matrix metalloproteinase MMP1. Interacts with host PRMT6; this interaction mediates Tat's methylation. Interacts with, and is ubiquitinated by MDM2/Hdm2. Interacts with host PSMC3 and HTATIP2. Interacts with STAB1; this interaction may overcome SATB1-mediated repression of IL2 and IL2RA (interleukin) in T cells by binding to the same domain than HDAC1. Interacts (when acetylated) with human CDK13, thereby increasing HIV-1 mRNA splicing and promoting the production of the doubly spliced HIV-1 protein Nef. Interacts with host TBP; this interaction modulates the activity of transcriptional pre-initiation complex. Interacts with host RELA. Interacts with host PLSCR1; this interaction negatively regulates Tat transactivation activity by altering its subcellular distribution.</text>
</comment>
<comment type="subcellular location">
    <subcellularLocation>
        <location evidence="1">Host nucleus</location>
        <location evidence="1">Host nucleolus</location>
    </subcellularLocation>
    <subcellularLocation>
        <location evidence="1">Host cytoplasm</location>
    </subcellularLocation>
    <subcellularLocation>
        <location evidence="1">Secreted</location>
    </subcellularLocation>
    <text evidence="1">Probably localizes to both nuclear and nucleolar compartments. Nuclear localization is mediated through the interaction of the nuclear localization signal with importin KPNB1. Secretion occurs through a Golgi-independent pathway. Tat is released from infected cells to the extracellular space where it remains associated to the cell membrane, or is secreted into the cerebrospinal fluid and sera. Extracellular Tat can be endocytosed by surrounding uninfected cells via binding to several receptors depending on the cell type.</text>
</comment>
<comment type="alternative products">
    <event type="alternative splicing"/>
    <isoform>
        <id>Q9Q717-1</id>
        <name>Long</name>
        <sequence type="displayed"/>
    </isoform>
    <isoform>
        <id>Q9Q717-2</id>
        <name>Short</name>
        <sequence type="described" ref="VSP_022431"/>
    </isoform>
</comment>
<comment type="domain">
    <text evidence="1">The cell attachment site mediates the interaction with ITGAV/ITGB3 and ITGA5/ITGB1 integrins, leading to vascular cell migration and invasion. This interaction also provides endothelial cells with the adhesion signal they require to grow in response to mitogens.</text>
</comment>
<comment type="domain">
    <text evidence="1">The Cys-rich region may bind 2 zinc ions. This region is involved in binding to KAT5.</text>
</comment>
<comment type="domain">
    <text evidence="1">The transactivation domain mediates the interaction with CCNT1, GCN5L2, and MDM2.</text>
</comment>
<comment type="domain">
    <text>The Arg-rich RNA-binding region binds the TAR RNA. This region also mediates the nuclear localization through direct binding to KPNB1 and is involved in Tat's transfer across cell membranes (protein transduction). The same region is required for the interaction with EP300, PCAF, EIF2AK2 and KDR.</text>
</comment>
<comment type="PTM">
    <text evidence="1">Asymmetrical arginine methylation by host PRMT6 seems to diminish the transactivation capacity of Tat and affects the interaction with host CCNT1.</text>
</comment>
<comment type="PTM">
    <text evidence="1">Acetylation by EP300, CREBBP, GCN5L2/GCN5 and PCAF regulates the transactivation activity of Tat. EP300-mediated acetylation of Lys-50 promotes dissociation of Tat from the TAR RNA through the competitive binding to PCAF's bromodomain. In addition, the non-acetylated Tat's N-terminus can also interact with PCAF. PCAF-mediated acetylation of Lys-28 enhances Tat's binding to CCNT1. Lys-50 is deacetylated by SIRT1.</text>
</comment>
<comment type="PTM">
    <text evidence="1">Polyubiquitination by host MDM2 does not target Tat to degradation, but activates its transactivation function and fosters interaction with CCNT1 and TAR RNA.</text>
</comment>
<comment type="PTM">
    <text evidence="1">Phosphorylated by EIF2AK2 on serine and threonine residues adjacent to the basic region important for TAR RNA binding and function. Phosphorylation of Tat by EIF2AK2 is dependent on the prior activation of EIF2AK2 by dsRNA.</text>
</comment>
<comment type="miscellaneous">
    <text evidence="1">This truncated variant has a premature stop codon. It may have arose as a consequence of tissue culture passaging.</text>
</comment>
<comment type="miscellaneous">
    <text evidence="1">HIV-1 lineages are divided in three main groups, M (for Major), O (for Outlier), and N (for New, or Non-M, Non-O). The vast majority of strains found worldwide belong to the group M. Group O seems to be endemic to and largely confined to Cameroon and neighboring countries in West Central Africa, where these viruses represent a small minority of HIV-1 strains. The group N is represented by a limited number of isolates from Cameroonian persons. The group M is further subdivided in 9 clades or subtypes (A to D, F to H, J and K).</text>
</comment>
<comment type="miscellaneous">
    <molecule>Isoform Short</molecule>
    <text evidence="3">Expressed in the late stage of the infection cycle, when unspliced viral RNAs are exported to the cytoplasm by the viral Rev protein.</text>
</comment>
<comment type="similarity">
    <text evidence="1">Belongs to the lentiviruses Tat family.</text>
</comment>
<organismHost>
    <name type="scientific">Homo sapiens</name>
    <name type="common">Human</name>
    <dbReference type="NCBI Taxonomy" id="9606"/>
</organismHost>
<dbReference type="EMBL" id="AF190127">
    <property type="protein sequence ID" value="AAF18399.1"/>
    <property type="molecule type" value="Genomic_DNA"/>
</dbReference>
<dbReference type="SMR" id="Q9Q717"/>
<dbReference type="Proteomes" id="UP000150531">
    <property type="component" value="Segment"/>
</dbReference>
<dbReference type="GO" id="GO:0005576">
    <property type="term" value="C:extracellular region"/>
    <property type="evidence" value="ECO:0007669"/>
    <property type="project" value="UniProtKB-SubCell"/>
</dbReference>
<dbReference type="GO" id="GO:0030430">
    <property type="term" value="C:host cell cytoplasm"/>
    <property type="evidence" value="ECO:0007669"/>
    <property type="project" value="UniProtKB-SubCell"/>
</dbReference>
<dbReference type="GO" id="GO:0044196">
    <property type="term" value="C:host cell nucleolus"/>
    <property type="evidence" value="ECO:0007669"/>
    <property type="project" value="UniProtKB-SubCell"/>
</dbReference>
<dbReference type="GO" id="GO:0042805">
    <property type="term" value="F:actinin binding"/>
    <property type="evidence" value="ECO:0007669"/>
    <property type="project" value="UniProtKB-UniRule"/>
</dbReference>
<dbReference type="GO" id="GO:0030332">
    <property type="term" value="F:cyclin binding"/>
    <property type="evidence" value="ECO:0007669"/>
    <property type="project" value="UniProtKB-UniRule"/>
</dbReference>
<dbReference type="GO" id="GO:0046872">
    <property type="term" value="F:metal ion binding"/>
    <property type="evidence" value="ECO:0007669"/>
    <property type="project" value="UniProtKB-UniRule"/>
</dbReference>
<dbReference type="GO" id="GO:0019904">
    <property type="term" value="F:protein domain specific binding"/>
    <property type="evidence" value="ECO:0007669"/>
    <property type="project" value="UniProtKB-UniRule"/>
</dbReference>
<dbReference type="GO" id="GO:0004865">
    <property type="term" value="F:protein serine/threonine phosphatase inhibitor activity"/>
    <property type="evidence" value="ECO:0007669"/>
    <property type="project" value="UniProtKB-KW"/>
</dbReference>
<dbReference type="GO" id="GO:0001070">
    <property type="term" value="F:RNA-binding transcription regulator activity"/>
    <property type="evidence" value="ECO:0007669"/>
    <property type="project" value="UniProtKB-UniRule"/>
</dbReference>
<dbReference type="GO" id="GO:1990970">
    <property type="term" value="F:trans-activation response element binding"/>
    <property type="evidence" value="ECO:0007669"/>
    <property type="project" value="UniProtKB-UniRule"/>
</dbReference>
<dbReference type="GO" id="GO:0006351">
    <property type="term" value="P:DNA-templated transcription"/>
    <property type="evidence" value="ECO:0007669"/>
    <property type="project" value="UniProtKB-UniRule"/>
</dbReference>
<dbReference type="GO" id="GO:0032968">
    <property type="term" value="P:positive regulation of transcription elongation by RNA polymerase II"/>
    <property type="evidence" value="ECO:0007669"/>
    <property type="project" value="UniProtKB-UniRule"/>
</dbReference>
<dbReference type="GO" id="GO:0050434">
    <property type="term" value="P:positive regulation of viral transcription"/>
    <property type="evidence" value="ECO:0007669"/>
    <property type="project" value="UniProtKB-UniRule"/>
</dbReference>
<dbReference type="GO" id="GO:0039525">
    <property type="term" value="P:symbiont-mediated perturbation of host chromatin organization"/>
    <property type="evidence" value="ECO:0007669"/>
    <property type="project" value="UniProtKB-UniRule"/>
</dbReference>
<dbReference type="GO" id="GO:0052170">
    <property type="term" value="P:symbiont-mediated suppression of host innate immune response"/>
    <property type="evidence" value="ECO:0007669"/>
    <property type="project" value="UniProtKB-KW"/>
</dbReference>
<dbReference type="GO" id="GO:0039606">
    <property type="term" value="P:symbiont-mediated suppression of host translation initiation"/>
    <property type="evidence" value="ECO:0007669"/>
    <property type="project" value="UniProtKB-KW"/>
</dbReference>
<dbReference type="GO" id="GO:0039502">
    <property type="term" value="P:symbiont-mediated suppression of host type I interferon-mediated signaling pathway"/>
    <property type="evidence" value="ECO:0007669"/>
    <property type="project" value="UniProtKB-UniRule"/>
</dbReference>
<dbReference type="Gene3D" id="4.10.20.10">
    <property type="entry name" value="Tat domain"/>
    <property type="match status" value="1"/>
</dbReference>
<dbReference type="HAMAP" id="MF_04079">
    <property type="entry name" value="HIV_TAT"/>
    <property type="match status" value="1"/>
</dbReference>
<dbReference type="InterPro" id="IPR001831">
    <property type="entry name" value="IV_Tat"/>
</dbReference>
<dbReference type="InterPro" id="IPR036963">
    <property type="entry name" value="Tat_dom_sf"/>
</dbReference>
<dbReference type="Pfam" id="PF00539">
    <property type="entry name" value="Tat"/>
    <property type="match status" value="1"/>
</dbReference>
<dbReference type="PRINTS" id="PR00055">
    <property type="entry name" value="HIVTATDOMAIN"/>
</dbReference>
<gene>
    <name evidence="1" type="primary">tat</name>
</gene>
<evidence type="ECO:0000255" key="1">
    <source>
        <dbReference type="HAMAP-Rule" id="MF_04079"/>
    </source>
</evidence>
<evidence type="ECO:0000256" key="2">
    <source>
        <dbReference type="SAM" id="MobiDB-lite"/>
    </source>
</evidence>
<evidence type="ECO:0000305" key="3"/>
<sequence>MDPVDPNQEPWNHPGSQPRTACNNCYCKKCCYHCQLCFLKKGLGIYYGRKKRRQRRGTPKSLQDHQTLIPKQPLSRTSGDPTGPEK</sequence>
<protein>
    <recommendedName>
        <fullName evidence="1">Protein Tat</fullName>
    </recommendedName>
    <alternativeName>
        <fullName evidence="1">Transactivating regulatory protein</fullName>
    </alternativeName>
</protein>
<keyword id="KW-0007">Acetylation</keyword>
<keyword id="KW-0010">Activator</keyword>
<keyword id="KW-0014">AIDS</keyword>
<keyword id="KW-0025">Alternative splicing</keyword>
<keyword id="KW-0053">Apoptosis</keyword>
<keyword id="KW-1035">Host cytoplasm</keyword>
<keyword id="KW-1048">Host nucleus</keyword>
<keyword id="KW-0945">Host-virus interaction</keyword>
<keyword id="KW-1090">Inhibition of host innate immune response by virus</keyword>
<keyword id="KW-1114">Inhibition of host interferon signaling pathway by virus</keyword>
<keyword id="KW-0922">Interferon antiviral system evasion</keyword>
<keyword id="KW-1017">Isopeptide bond</keyword>
<keyword id="KW-0479">Metal-binding</keyword>
<keyword id="KW-0488">Methylation</keyword>
<keyword id="KW-1122">Modulation of host chromatin by virus</keyword>
<keyword id="KW-1126">Modulation of host PP1 activity by virus</keyword>
<keyword id="KW-0597">Phosphoprotein</keyword>
<keyword id="KW-0694">RNA-binding</keyword>
<keyword id="KW-0964">Secreted</keyword>
<keyword id="KW-0804">Transcription</keyword>
<keyword id="KW-0805">Transcription regulation</keyword>
<keyword id="KW-0832">Ubl conjugation</keyword>
<keyword id="KW-0899">Viral immunoevasion</keyword>
<keyword id="KW-0862">Zinc</keyword>
<name>TAT_HV1V9</name>
<feature type="chain" id="PRO_0000244859" description="Protein Tat">
    <location>
        <begin position="1"/>
        <end position="86"/>
    </location>
</feature>
<feature type="region of interest" description="Transactivation" evidence="1">
    <location>
        <begin position="1"/>
        <end position="48"/>
    </location>
</feature>
<feature type="region of interest" description="Interaction with human CREBBP" evidence="1">
    <location>
        <begin position="1"/>
        <end position="24"/>
    </location>
</feature>
<feature type="region of interest" description="Cysteine-rich" evidence="1">
    <location>
        <begin position="22"/>
        <end position="37"/>
    </location>
</feature>
<feature type="region of interest" description="Core" evidence="1">
    <location>
        <begin position="38"/>
        <end position="48"/>
    </location>
</feature>
<feature type="region of interest" description="Disordered" evidence="2">
    <location>
        <begin position="48"/>
        <end position="86"/>
    </location>
</feature>
<feature type="region of interest" description="Interaction with the host capping enzyme RNGTT" evidence="1">
    <location>
        <begin position="49"/>
        <end position="86"/>
    </location>
</feature>
<feature type="short sequence motif" description="Nuclear localization signal, RNA-binding (TAR), and protein transduction" evidence="1">
    <location>
        <begin position="49"/>
        <end position="57"/>
    </location>
</feature>
<feature type="compositionally biased region" description="Basic residues" evidence="2">
    <location>
        <begin position="48"/>
        <end position="58"/>
    </location>
</feature>
<feature type="binding site" evidence="1">
    <location>
        <position position="22"/>
    </location>
    <ligand>
        <name>Zn(2+)</name>
        <dbReference type="ChEBI" id="CHEBI:29105"/>
        <label>1</label>
    </ligand>
</feature>
<feature type="binding site" evidence="1">
    <location>
        <position position="25"/>
    </location>
    <ligand>
        <name>Zn(2+)</name>
        <dbReference type="ChEBI" id="CHEBI:29105"/>
        <label>2</label>
    </ligand>
</feature>
<feature type="binding site" evidence="1">
    <location>
        <position position="27"/>
    </location>
    <ligand>
        <name>Zn(2+)</name>
        <dbReference type="ChEBI" id="CHEBI:29105"/>
        <label>2</label>
    </ligand>
</feature>
<feature type="binding site" evidence="1">
    <location>
        <position position="30"/>
    </location>
    <ligand>
        <name>Zn(2+)</name>
        <dbReference type="ChEBI" id="CHEBI:29105"/>
        <label>2</label>
    </ligand>
</feature>
<feature type="binding site" evidence="1">
    <location>
        <position position="33"/>
    </location>
    <ligand>
        <name>Zn(2+)</name>
        <dbReference type="ChEBI" id="CHEBI:29105"/>
        <label>1</label>
    </ligand>
</feature>
<feature type="binding site" evidence="1">
    <location>
        <position position="34"/>
    </location>
    <ligand>
        <name>Zn(2+)</name>
        <dbReference type="ChEBI" id="CHEBI:29105"/>
        <label>1</label>
    </ligand>
</feature>
<feature type="binding site" evidence="1">
    <location>
        <position position="37"/>
    </location>
    <ligand>
        <name>Zn(2+)</name>
        <dbReference type="ChEBI" id="CHEBI:29105"/>
        <label>1</label>
    </ligand>
</feature>
<feature type="site" description="Essential for Tat translocation through the endosomal membrane" evidence="1">
    <location>
        <position position="11"/>
    </location>
</feature>
<feature type="modified residue" description="N6-acetyllysine; by host PCAF" evidence="1">
    <location>
        <position position="28"/>
    </location>
</feature>
<feature type="modified residue" description="N6-acetyllysine; by host EP300 and GCN5L2" evidence="1">
    <location>
        <position position="50"/>
    </location>
</feature>
<feature type="modified residue" description="N6-acetyllysine; by host EP300 and GCN5L2" evidence="1">
    <location>
        <position position="51"/>
    </location>
</feature>
<feature type="modified residue" description="Asymmetric dimethylarginine; by host PRMT6" evidence="1">
    <location>
        <position position="52"/>
    </location>
</feature>
<feature type="modified residue" description="Asymmetric dimethylarginine; by host PRMT6" evidence="1">
    <location>
        <position position="53"/>
    </location>
</feature>
<feature type="cross-link" description="Glycyl lysine isopeptide (Lys-Gly) (interchain with G-Cter in ubiquitin)" evidence="1">
    <location>
        <position position="71"/>
    </location>
</feature>
<feature type="splice variant" id="VSP_022431" description="In isoform Short.">
    <location>
        <begin position="73"/>
        <end position="86"/>
    </location>
</feature>